<accession>Q83424</accession>
<accession>Q83423</accession>
<accession>Q83426</accession>
<name>RDRP_MNSV</name>
<keyword id="KW-1045">Host mitochondrion</keyword>
<keyword id="KW-0547">Nucleotide-binding</keyword>
<keyword id="KW-0548">Nucleotidyltransferase</keyword>
<keyword id="KW-1185">Reference proteome</keyword>
<keyword id="KW-0696">RNA-directed RNA polymerase</keyword>
<keyword id="KW-0808">Transferase</keyword>
<keyword id="KW-0693">Viral RNA replication</keyword>
<reference key="1">
    <citation type="journal article" date="1989" name="J. Gen. Virol.">
        <title>Coat protein of melon necrotic spot carmovirus is more similar to those of tombusviruses than those of carmoviruses.</title>
        <authorList>
            <person name="Riviere C.J."/>
            <person name="Pot J."/>
            <person name="Tremaine J.H."/>
            <person name="Rochon D.M."/>
        </authorList>
    </citation>
    <scope>NUCLEOTIDE SEQUENCE [GENOMIC DNA]</scope>
</reference>
<reference key="2">
    <citation type="journal article" date="1990" name="J. Gen. Virol.">
        <title>Nucleotide sequence and genomic organization of melon necrotic spot virus.</title>
        <authorList>
            <person name="Riviere C.J."/>
            <person name="Rochon D.M."/>
        </authorList>
    </citation>
    <scope>NUCLEOTIDE SEQUENCE [GENOMIC DNA]</scope>
</reference>
<reference key="3">
    <citation type="journal article" date="2015" name="Mol. Plant Microbe Interact.">
        <title>Melon necrotic spot virus Replication Occurs in Association with Altered Mitochondria.</title>
        <authorList>
            <person name="Gomez-Aix C."/>
            <person name="Garcia-Garcia M."/>
            <person name="Aranda M.A."/>
            <person name="Sanchez-Pina M.A."/>
        </authorList>
    </citation>
    <scope>FUNCTION (P29)</scope>
    <scope>SUBCELLULAR LOCATION (P29)</scope>
</reference>
<organism>
    <name type="scientific">Melon necrotic spot virus</name>
    <name type="common">MNSV</name>
    <dbReference type="NCBI Taxonomy" id="11987"/>
    <lineage>
        <taxon>Viruses</taxon>
        <taxon>Riboviria</taxon>
        <taxon>Orthornavirae</taxon>
        <taxon>Kitrinoviricota</taxon>
        <taxon>Tolucaviricetes</taxon>
        <taxon>Tolivirales</taxon>
        <taxon>Tombusviridae</taxon>
        <taxon>Procedovirinae</taxon>
        <taxon>Gammacarmovirus</taxon>
        <taxon>Gammacarmovirus melonis</taxon>
    </lineage>
</organism>
<organismHost>
    <name type="scientific">Cucumis melo</name>
    <name type="common">Muskmelon</name>
    <dbReference type="NCBI Taxonomy" id="3656"/>
</organismHost>
<organismHost>
    <name type="scientific">Cucumis sativus</name>
    <name type="common">Cucumber</name>
    <dbReference type="NCBI Taxonomy" id="3659"/>
</organismHost>
<dbReference type="EC" id="2.7.7.48" evidence="2"/>
<dbReference type="EMBL" id="M29671">
    <property type="protein sequence ID" value="AAB02430.1"/>
    <property type="molecule type" value="Genomic_RNA"/>
</dbReference>
<dbReference type="EMBL" id="M29671">
    <property type="protein sequence ID" value="AAB02431.1"/>
    <property type="molecule type" value="Genomic_RNA"/>
</dbReference>
<dbReference type="EMBL" id="D12536">
    <property type="protein sequence ID" value="BAA02099.1"/>
    <property type="molecule type" value="Genomic_RNA"/>
</dbReference>
<dbReference type="EMBL" id="D12536">
    <property type="protein sequence ID" value="BAA02100.1"/>
    <property type="molecule type" value="Genomic_RNA"/>
</dbReference>
<dbReference type="KEGG" id="vg:1491976"/>
<dbReference type="KEGG" id="vg:1491977"/>
<dbReference type="OrthoDB" id="12338at10239"/>
<dbReference type="Proteomes" id="UP000202003">
    <property type="component" value="Genome"/>
</dbReference>
<dbReference type="GO" id="GO:0033650">
    <property type="term" value="C:host cell mitochondrion"/>
    <property type="evidence" value="ECO:0007669"/>
    <property type="project" value="UniProtKB-SubCell"/>
</dbReference>
<dbReference type="GO" id="GO:0000166">
    <property type="term" value="F:nucleotide binding"/>
    <property type="evidence" value="ECO:0007669"/>
    <property type="project" value="UniProtKB-KW"/>
</dbReference>
<dbReference type="GO" id="GO:0003723">
    <property type="term" value="F:RNA binding"/>
    <property type="evidence" value="ECO:0007669"/>
    <property type="project" value="InterPro"/>
</dbReference>
<dbReference type="GO" id="GO:0003968">
    <property type="term" value="F:RNA-directed RNA polymerase activity"/>
    <property type="evidence" value="ECO:0007669"/>
    <property type="project" value="UniProtKB-KW"/>
</dbReference>
<dbReference type="GO" id="GO:0039694">
    <property type="term" value="P:viral RNA genome replication"/>
    <property type="evidence" value="ECO:0007669"/>
    <property type="project" value="InterPro"/>
</dbReference>
<dbReference type="CDD" id="cd23242">
    <property type="entry name" value="Gammacarmovirus_RdRp"/>
    <property type="match status" value="1"/>
</dbReference>
<dbReference type="Gene3D" id="3.30.70.270">
    <property type="match status" value="1"/>
</dbReference>
<dbReference type="InterPro" id="IPR043502">
    <property type="entry name" value="DNA/RNA_pol_sf"/>
</dbReference>
<dbReference type="InterPro" id="IPR043128">
    <property type="entry name" value="Rev_trsase/Diguanyl_cyclase"/>
</dbReference>
<dbReference type="InterPro" id="IPR007094">
    <property type="entry name" value="RNA-dir_pol_PSvirus"/>
</dbReference>
<dbReference type="InterPro" id="IPR002166">
    <property type="entry name" value="RNA_pol_HCV"/>
</dbReference>
<dbReference type="Pfam" id="PF00998">
    <property type="entry name" value="RdRP_3"/>
    <property type="match status" value="1"/>
</dbReference>
<dbReference type="SUPFAM" id="SSF56672">
    <property type="entry name" value="DNA/RNA polymerases"/>
    <property type="match status" value="1"/>
</dbReference>
<dbReference type="PROSITE" id="PS50507">
    <property type="entry name" value="RDRP_SSRNA_POS"/>
    <property type="match status" value="1"/>
</dbReference>
<sequence>MDTGLKFLVSGGLATSSVIRKVSAVSSLDSSLPSSSILSAIHGSWTSAISHDCSKIAKVAAIVGIGYLGVRIGAAWCRRTPGITNSIITYGEEVVEQVKVDIDEDAEEESDIGEEIVVGTIGIGIHTNVNPEVRAKRRHRSRPFIKKIVNLTKNHFGGCPDSSKSNVMAVSKFVYEQCKQHNCLPHQTRLIMSIAVPLVLSPDMYDISSKALLNSEILTENRATLDRLKTLDGWLTHLVCHPLSAKAWRRAIDNLCGLPDWKAFKLVNXGCLEELAGFCTSVRRGTHPDMTEFPQDRPIKTRKLYCLGGVGTSVKFNVHNNSLANLRRGLVERVFFVENDKKELEPAPKPLSGAFDRLTWFRRKLHSIVGTHSSISPGQFLDFYTGRRRTIYEGAVKSLEGLSVQRRDAYLKTFVKAEKINTTKKPDPAPRVIQPRNVRYNVEVGRYLRRFEHYLYRGIDEIWNGPTIIKGYTVEQIGKIARDAWDSFVSPVAIGFDMKRFDQHVSSDALKWEHSVYLDAFCHDSYLAELLKWQLVNKGVGYASDGMIKYKVDGCRMSGDMNTAMGNCLIACAITHDFFRSRGIRARLMNNGDDCVVICEKECAAVVKADMVRHWRQFGFQCELECDAEIFEQIEFCQMRPVYDGEKYVMVRNPLVSLSKDSYSVGPWNGINHARKWVNAVGLCGLSLTGGIPVVQSYYNMMIRNTQSVNSSGILRDVSFASGFRELARLGNRKSGAISEDARFSFYLAFGITPDLQRAMESDYDAHTIEWGFVPQGNPRIQPISWTLNEL</sequence>
<comment type="function">
    <molecule>RNA-directed RNA polymerase</molecule>
    <text evidence="1">RNA-dependent RNA polymerase that plays an essential role in the virus replication.</text>
</comment>
<comment type="function">
    <molecule>p29</molecule>
    <text evidence="3">Induces the reorganization of host mitochondria and the formation of structures with numerous dilations surrounded by double membranes, which may provide a protected environment to viral replication.</text>
</comment>
<comment type="catalytic activity">
    <reaction evidence="2">
        <text>RNA(n) + a ribonucleoside 5'-triphosphate = RNA(n+1) + diphosphate</text>
        <dbReference type="Rhea" id="RHEA:21248"/>
        <dbReference type="Rhea" id="RHEA-COMP:14527"/>
        <dbReference type="Rhea" id="RHEA-COMP:17342"/>
        <dbReference type="ChEBI" id="CHEBI:33019"/>
        <dbReference type="ChEBI" id="CHEBI:61557"/>
        <dbReference type="ChEBI" id="CHEBI:140395"/>
        <dbReference type="EC" id="2.7.7.48"/>
    </reaction>
</comment>
<comment type="subcellular location">
    <molecule>p29</molecule>
    <subcellularLocation>
        <location evidence="3">Host mitochondrion</location>
    </subcellularLocation>
</comment>
<comment type="miscellaneous">
    <text evidence="7">This protein is translated as a fusion protein by episodic readthrough of P29 termination codon. Readthrough of the terminator codon TAG occurs between the codons for 268-Asn and 270-Gly.</text>
</comment>
<comment type="similarity">
    <text evidence="6">Belongs to the tombusviridae RNA polymerase family.</text>
</comment>
<protein>
    <recommendedName>
        <fullName evidence="2">RNA-directed RNA polymerase</fullName>
        <ecNumber evidence="2">2.7.7.48</ecNumber>
    </recommendedName>
    <alternativeName>
        <fullName evidence="4">p89</fullName>
    </alternativeName>
    <component>
        <recommendedName>
            <fullName evidence="4 5">p29</fullName>
        </recommendedName>
    </component>
</protein>
<proteinExistence type="inferred from homology"/>
<gene>
    <name evidence="8" type="primary">ORF1</name>
</gene>
<feature type="chain" id="PRO_0000455298" description="RNA-directed RNA polymerase">
    <location>
        <begin position="1"/>
        <end position="791"/>
    </location>
</feature>
<feature type="chain" id="PRO_0000455299" description="p29">
    <location>
        <begin position="1"/>
        <end position="268"/>
    </location>
</feature>
<feature type="domain" description="RdRp catalytic" evidence="2">
    <location>
        <begin position="491"/>
        <end position="607"/>
    </location>
</feature>
<evidence type="ECO:0000250" key="1">
    <source>
        <dbReference type="UniProtKB" id="P11640"/>
    </source>
</evidence>
<evidence type="ECO:0000255" key="2">
    <source>
        <dbReference type="PROSITE-ProRule" id="PRU00539"/>
    </source>
</evidence>
<evidence type="ECO:0000269" key="3">
    <source>
    </source>
</evidence>
<evidence type="ECO:0000303" key="4">
    <source>
    </source>
</evidence>
<evidence type="ECO:0000303" key="5">
    <source>
    </source>
</evidence>
<evidence type="ECO:0000305" key="6"/>
<evidence type="ECO:0000305" key="7">
    <source>
    </source>
</evidence>
<evidence type="ECO:0000312" key="8">
    <source>
        <dbReference type="EMBL" id="AAB02430.1"/>
    </source>
</evidence>